<reference key="1">
    <citation type="journal article" date="2005" name="Nature">
        <title>Genomic sequence of the pathogenic and allergenic filamentous fungus Aspergillus fumigatus.</title>
        <authorList>
            <person name="Nierman W.C."/>
            <person name="Pain A."/>
            <person name="Anderson M.J."/>
            <person name="Wortman J.R."/>
            <person name="Kim H.S."/>
            <person name="Arroyo J."/>
            <person name="Berriman M."/>
            <person name="Abe K."/>
            <person name="Archer D.B."/>
            <person name="Bermejo C."/>
            <person name="Bennett J.W."/>
            <person name="Bowyer P."/>
            <person name="Chen D."/>
            <person name="Collins M."/>
            <person name="Coulsen R."/>
            <person name="Davies R."/>
            <person name="Dyer P.S."/>
            <person name="Farman M.L."/>
            <person name="Fedorova N."/>
            <person name="Fedorova N.D."/>
            <person name="Feldblyum T.V."/>
            <person name="Fischer R."/>
            <person name="Fosker N."/>
            <person name="Fraser A."/>
            <person name="Garcia J.L."/>
            <person name="Garcia M.J."/>
            <person name="Goble A."/>
            <person name="Goldman G.H."/>
            <person name="Gomi K."/>
            <person name="Griffith-Jones S."/>
            <person name="Gwilliam R."/>
            <person name="Haas B.J."/>
            <person name="Haas H."/>
            <person name="Harris D.E."/>
            <person name="Horiuchi H."/>
            <person name="Huang J."/>
            <person name="Humphray S."/>
            <person name="Jimenez J."/>
            <person name="Keller N."/>
            <person name="Khouri H."/>
            <person name="Kitamoto K."/>
            <person name="Kobayashi T."/>
            <person name="Konzack S."/>
            <person name="Kulkarni R."/>
            <person name="Kumagai T."/>
            <person name="Lafton A."/>
            <person name="Latge J.-P."/>
            <person name="Li W."/>
            <person name="Lord A."/>
            <person name="Lu C."/>
            <person name="Majoros W.H."/>
            <person name="May G.S."/>
            <person name="Miller B.L."/>
            <person name="Mohamoud Y."/>
            <person name="Molina M."/>
            <person name="Monod M."/>
            <person name="Mouyna I."/>
            <person name="Mulligan S."/>
            <person name="Murphy L.D."/>
            <person name="O'Neil S."/>
            <person name="Paulsen I."/>
            <person name="Penalva M.A."/>
            <person name="Pertea M."/>
            <person name="Price C."/>
            <person name="Pritchard B.L."/>
            <person name="Quail M.A."/>
            <person name="Rabbinowitsch E."/>
            <person name="Rawlins N."/>
            <person name="Rajandream M.A."/>
            <person name="Reichard U."/>
            <person name="Renauld H."/>
            <person name="Robson G.D."/>
            <person name="Rodriguez de Cordoba S."/>
            <person name="Rodriguez-Pena J.M."/>
            <person name="Ronning C.M."/>
            <person name="Rutter S."/>
            <person name="Salzberg S.L."/>
            <person name="Sanchez M."/>
            <person name="Sanchez-Ferrero J.C."/>
            <person name="Saunders D."/>
            <person name="Seeger K."/>
            <person name="Squares R."/>
            <person name="Squares S."/>
            <person name="Takeuchi M."/>
            <person name="Tekaia F."/>
            <person name="Turner G."/>
            <person name="Vazquez de Aldana C.R."/>
            <person name="Weidman J."/>
            <person name="White O."/>
            <person name="Woodward J.R."/>
            <person name="Yu J.-H."/>
            <person name="Fraser C.M."/>
            <person name="Galagan J.E."/>
            <person name="Asai K."/>
            <person name="Machida M."/>
            <person name="Hall N."/>
            <person name="Barrell B.G."/>
            <person name="Denning D.W."/>
        </authorList>
    </citation>
    <scope>NUCLEOTIDE SEQUENCE [LARGE SCALE GENOMIC DNA]</scope>
    <source>
        <strain>ATCC MYA-4609 / CBS 101355 / FGSC A1100 / Af293</strain>
    </source>
</reference>
<evidence type="ECO:0000250" key="1"/>
<evidence type="ECO:0000305" key="2"/>
<accession>Q4WTT8</accession>
<comment type="function">
    <text evidence="1">Essential component of the SCF (SKP1-CUL1-F-box protein) E3 ubiquitin ligase complexes, which mediate the ubiquitination and subsequent proteasomal degradation of target proteins. Controls sulfur metabolite repression, probably by mediating the inactivation or degradation of the metR transcription factor (By similarity).</text>
</comment>
<comment type="pathway">
    <text>Protein modification; protein ubiquitination.</text>
</comment>
<comment type="subunit">
    <text evidence="1">Component of the SCF (SKP1-CUL1-F-box protein) E3 ubiquitin ligase complexes.</text>
</comment>
<comment type="similarity">
    <text evidence="2">Belongs to the SKP1 family.</text>
</comment>
<gene>
    <name type="primary">sconC</name>
    <name type="synonym">skpA</name>
    <name type="ORF">AFUA_5G06060</name>
</gene>
<sequence length="158" mass="18141">MTTVTLTSSDGVDITVDRDVAERSILIKNMLEDLGESDEAIPIPNVNEVVLKKVIEWCTHHKNDPPSTGDDDDSRRKTTDIDEWDQKFMQVDQEMLFEIILAANYLDIKALLDVGCKTVANMIKGKSPEEIRKTFNIQNDFTPEEEDQIRRENEWAEE</sequence>
<protein>
    <recommendedName>
        <fullName>E3 ubiquitin ligase complex SCF subunit sconC</fullName>
    </recommendedName>
    <alternativeName>
        <fullName>Sulfur controller C</fullName>
    </alternativeName>
    <alternativeName>
        <fullName>Sulfur metabolite repression control protein C</fullName>
    </alternativeName>
</protein>
<organism>
    <name type="scientific">Aspergillus fumigatus (strain ATCC MYA-4609 / CBS 101355 / FGSC A1100 / Af293)</name>
    <name type="common">Neosartorya fumigata</name>
    <dbReference type="NCBI Taxonomy" id="330879"/>
    <lineage>
        <taxon>Eukaryota</taxon>
        <taxon>Fungi</taxon>
        <taxon>Dikarya</taxon>
        <taxon>Ascomycota</taxon>
        <taxon>Pezizomycotina</taxon>
        <taxon>Eurotiomycetes</taxon>
        <taxon>Eurotiomycetidae</taxon>
        <taxon>Eurotiales</taxon>
        <taxon>Aspergillaceae</taxon>
        <taxon>Aspergillus</taxon>
        <taxon>Aspergillus subgen. Fumigati</taxon>
    </lineage>
</organism>
<dbReference type="EMBL" id="AAHF01000003">
    <property type="protein sequence ID" value="EAL91988.1"/>
    <property type="molecule type" value="Genomic_DNA"/>
</dbReference>
<dbReference type="RefSeq" id="XP_754026.1">
    <property type="nucleotide sequence ID" value="XM_748933.1"/>
</dbReference>
<dbReference type="SMR" id="Q4WTT8"/>
<dbReference type="FunCoup" id="Q4WTT8">
    <property type="interactions" value="797"/>
</dbReference>
<dbReference type="STRING" id="330879.Q4WTT8"/>
<dbReference type="EnsemblFungi" id="EAL91988">
    <property type="protein sequence ID" value="EAL91988"/>
    <property type="gene ID" value="AFUA_5G06060"/>
</dbReference>
<dbReference type="GeneID" id="3511133"/>
<dbReference type="KEGG" id="afm:AFUA_5G06060"/>
<dbReference type="VEuPathDB" id="FungiDB:Afu5g06060"/>
<dbReference type="eggNOG" id="KOG1724">
    <property type="taxonomic scope" value="Eukaryota"/>
</dbReference>
<dbReference type="HOGENOM" id="CLU_059252_4_0_1"/>
<dbReference type="InParanoid" id="Q4WTT8"/>
<dbReference type="OMA" id="DKYTASM"/>
<dbReference type="OrthoDB" id="2342932at2759"/>
<dbReference type="UniPathway" id="UPA00143"/>
<dbReference type="Proteomes" id="UP000002530">
    <property type="component" value="Chromosome 5"/>
</dbReference>
<dbReference type="GO" id="GO:0031518">
    <property type="term" value="C:CBF3 complex"/>
    <property type="evidence" value="ECO:0007669"/>
    <property type="project" value="EnsemblFungi"/>
</dbReference>
<dbReference type="GO" id="GO:0005737">
    <property type="term" value="C:cytoplasm"/>
    <property type="evidence" value="ECO:0000318"/>
    <property type="project" value="GO_Central"/>
</dbReference>
<dbReference type="GO" id="GO:0000776">
    <property type="term" value="C:kinetochore"/>
    <property type="evidence" value="ECO:0007669"/>
    <property type="project" value="EnsemblFungi"/>
</dbReference>
<dbReference type="GO" id="GO:0043224">
    <property type="term" value="C:nuclear SCF ubiquitin ligase complex"/>
    <property type="evidence" value="ECO:0007669"/>
    <property type="project" value="EnsemblFungi"/>
</dbReference>
<dbReference type="GO" id="GO:0005634">
    <property type="term" value="C:nucleus"/>
    <property type="evidence" value="ECO:0000318"/>
    <property type="project" value="GO_Central"/>
</dbReference>
<dbReference type="GO" id="GO:0043291">
    <property type="term" value="C:RAVE complex"/>
    <property type="evidence" value="ECO:0007669"/>
    <property type="project" value="EnsemblFungi"/>
</dbReference>
<dbReference type="GO" id="GO:0017117">
    <property type="term" value="C:single-stranded DNA-dependent ATP-dependent DNA helicase complex"/>
    <property type="evidence" value="ECO:0007669"/>
    <property type="project" value="EnsemblFungi"/>
</dbReference>
<dbReference type="GO" id="GO:0097602">
    <property type="term" value="F:cullin family protein binding"/>
    <property type="evidence" value="ECO:0000318"/>
    <property type="project" value="GO_Central"/>
</dbReference>
<dbReference type="GO" id="GO:0003688">
    <property type="term" value="F:DNA replication origin binding"/>
    <property type="evidence" value="ECO:0007669"/>
    <property type="project" value="EnsemblFungi"/>
</dbReference>
<dbReference type="GO" id="GO:0043295">
    <property type="term" value="F:glutathione binding"/>
    <property type="evidence" value="ECO:0000314"/>
    <property type="project" value="AspGD"/>
</dbReference>
<dbReference type="GO" id="GO:0061630">
    <property type="term" value="F:ubiquitin protein ligase activity"/>
    <property type="evidence" value="ECO:0007669"/>
    <property type="project" value="EnsemblFungi"/>
</dbReference>
<dbReference type="GO" id="GO:0010458">
    <property type="term" value="P:exit from mitosis"/>
    <property type="evidence" value="ECO:0007669"/>
    <property type="project" value="EnsemblFungi"/>
</dbReference>
<dbReference type="GO" id="GO:0000082">
    <property type="term" value="P:G1/S transition of mitotic cell cycle"/>
    <property type="evidence" value="ECO:0007669"/>
    <property type="project" value="EnsemblFungi"/>
</dbReference>
<dbReference type="GO" id="GO:0000086">
    <property type="term" value="P:G2/M transition of mitotic cell cycle"/>
    <property type="evidence" value="ECO:0007669"/>
    <property type="project" value="EnsemblFungi"/>
</dbReference>
<dbReference type="GO" id="GO:0051382">
    <property type="term" value="P:kinetochore assembly"/>
    <property type="evidence" value="ECO:0007669"/>
    <property type="project" value="EnsemblFungi"/>
</dbReference>
<dbReference type="GO" id="GO:0000278">
    <property type="term" value="P:mitotic cell cycle"/>
    <property type="evidence" value="ECO:0000318"/>
    <property type="project" value="GO_Central"/>
</dbReference>
<dbReference type="GO" id="GO:0101026">
    <property type="term" value="P:mitotic nuclear membrane biogenesis"/>
    <property type="evidence" value="ECO:0007669"/>
    <property type="project" value="EnsemblFungi"/>
</dbReference>
<dbReference type="GO" id="GO:2000766">
    <property type="term" value="P:negative regulation of cytoplasmic translation"/>
    <property type="evidence" value="ECO:0007669"/>
    <property type="project" value="EnsemblFungi"/>
</dbReference>
<dbReference type="GO" id="GO:0045841">
    <property type="term" value="P:negative regulation of mitotic metaphase/anaphase transition"/>
    <property type="evidence" value="ECO:0007669"/>
    <property type="project" value="EnsemblFungi"/>
</dbReference>
<dbReference type="GO" id="GO:0010828">
    <property type="term" value="P:positive regulation of D-glucose transmembrane transport"/>
    <property type="evidence" value="ECO:0007669"/>
    <property type="project" value="EnsemblFungi"/>
</dbReference>
<dbReference type="GO" id="GO:0045116">
    <property type="term" value="P:protein neddylation"/>
    <property type="evidence" value="ECO:0007669"/>
    <property type="project" value="EnsemblFungi"/>
</dbReference>
<dbReference type="GO" id="GO:0016567">
    <property type="term" value="P:protein ubiquitination"/>
    <property type="evidence" value="ECO:0007669"/>
    <property type="project" value="UniProtKB-UniPathway"/>
</dbReference>
<dbReference type="GO" id="GO:0000018">
    <property type="term" value="P:regulation of DNA recombination"/>
    <property type="evidence" value="ECO:0007669"/>
    <property type="project" value="EnsemblFungi"/>
</dbReference>
<dbReference type="GO" id="GO:0007096">
    <property type="term" value="P:regulation of exit from mitosis"/>
    <property type="evidence" value="ECO:0007669"/>
    <property type="project" value="EnsemblFungi"/>
</dbReference>
<dbReference type="GO" id="GO:0043254">
    <property type="term" value="P:regulation of protein-containing complex assembly"/>
    <property type="evidence" value="ECO:0007669"/>
    <property type="project" value="EnsemblFungi"/>
</dbReference>
<dbReference type="GO" id="GO:0000712">
    <property type="term" value="P:resolution of meiotic recombination intermediates"/>
    <property type="evidence" value="ECO:0007669"/>
    <property type="project" value="EnsemblFungi"/>
</dbReference>
<dbReference type="GO" id="GO:0031146">
    <property type="term" value="P:SCF-dependent proteasomal ubiquitin-dependent protein catabolic process"/>
    <property type="evidence" value="ECO:0000318"/>
    <property type="project" value="GO_Central"/>
</dbReference>
<dbReference type="GO" id="GO:0000921">
    <property type="term" value="P:septin ring assembly"/>
    <property type="evidence" value="ECO:0007669"/>
    <property type="project" value="EnsemblFungi"/>
</dbReference>
<dbReference type="GO" id="GO:0030466">
    <property type="term" value="P:silent mating-type cassette heterochromatin formation"/>
    <property type="evidence" value="ECO:0007669"/>
    <property type="project" value="EnsemblFungi"/>
</dbReference>
<dbReference type="GO" id="GO:0007035">
    <property type="term" value="P:vacuolar acidification"/>
    <property type="evidence" value="ECO:0007669"/>
    <property type="project" value="EnsemblFungi"/>
</dbReference>
<dbReference type="GO" id="GO:0070072">
    <property type="term" value="P:vacuolar proton-transporting V-type ATPase complex assembly"/>
    <property type="evidence" value="ECO:0007669"/>
    <property type="project" value="EnsemblFungi"/>
</dbReference>
<dbReference type="CDD" id="cd18322">
    <property type="entry name" value="BTB_POZ_SKP1"/>
    <property type="match status" value="1"/>
</dbReference>
<dbReference type="FunFam" id="3.30.710.10:FF:000026">
    <property type="entry name" value="E3 ubiquitin ligase complex SCF subunit"/>
    <property type="match status" value="1"/>
</dbReference>
<dbReference type="Gene3D" id="3.30.710.10">
    <property type="entry name" value="Potassium Channel Kv1.1, Chain A"/>
    <property type="match status" value="1"/>
</dbReference>
<dbReference type="InterPro" id="IPR016897">
    <property type="entry name" value="SKP1"/>
</dbReference>
<dbReference type="InterPro" id="IPR001232">
    <property type="entry name" value="SKP1-like"/>
</dbReference>
<dbReference type="InterPro" id="IPR036296">
    <property type="entry name" value="SKP1-like_dim_sf"/>
</dbReference>
<dbReference type="InterPro" id="IPR011333">
    <property type="entry name" value="SKP1/BTB/POZ_sf"/>
</dbReference>
<dbReference type="InterPro" id="IPR016072">
    <property type="entry name" value="Skp1_comp_dimer"/>
</dbReference>
<dbReference type="InterPro" id="IPR016073">
    <property type="entry name" value="Skp1_comp_POZ"/>
</dbReference>
<dbReference type="PANTHER" id="PTHR11165">
    <property type="entry name" value="SKP1"/>
    <property type="match status" value="1"/>
</dbReference>
<dbReference type="Pfam" id="PF01466">
    <property type="entry name" value="Skp1"/>
    <property type="match status" value="1"/>
</dbReference>
<dbReference type="Pfam" id="PF03931">
    <property type="entry name" value="Skp1_POZ"/>
    <property type="match status" value="1"/>
</dbReference>
<dbReference type="PIRSF" id="PIRSF028729">
    <property type="entry name" value="E3_ubiquit_lig_SCF_Skp"/>
    <property type="match status" value="1"/>
</dbReference>
<dbReference type="SMART" id="SM00512">
    <property type="entry name" value="Skp1"/>
    <property type="match status" value="1"/>
</dbReference>
<dbReference type="SUPFAM" id="SSF54695">
    <property type="entry name" value="POZ domain"/>
    <property type="match status" value="1"/>
</dbReference>
<dbReference type="SUPFAM" id="SSF81382">
    <property type="entry name" value="Skp1 dimerisation domain-like"/>
    <property type="match status" value="1"/>
</dbReference>
<proteinExistence type="inferred from homology"/>
<feature type="chain" id="PRO_0000397263" description="E3 ubiquitin ligase complex SCF subunit sconC">
    <location>
        <begin position="1"/>
        <end position="158"/>
    </location>
</feature>
<feature type="region of interest" description="Interaction with the F-box domain of F-box proteins" evidence="1">
    <location>
        <begin position="100"/>
        <end position="158"/>
    </location>
</feature>
<keyword id="KW-1185">Reference proteome</keyword>
<keyword id="KW-0833">Ubl conjugation pathway</keyword>
<name>SKP1_ASPFU</name>